<evidence type="ECO:0000255" key="1">
    <source>
        <dbReference type="HAMAP-Rule" id="MF_01152"/>
    </source>
</evidence>
<accession>B2J3J3</accession>
<name>DNAJ_NOSP7</name>
<sequence length="375" mass="40951">MARDYYEILGVSRDTDKEELKQAYRRLARKYHPDVNKEPGAEDRFKEINRAYEVLSEPETRARYDRFGPEGVSGAGAGFQDVGDMGGFADIFESIFSGFAGGMGSPTQQRRRSGPARGDDLRLDLKLDFREAVFGGEKEIRISHLENCEVCSGSGAKPGTRPRTCSTCSGSGQVRRVTRTPFGSFTQVSTCPTCNGTGMVIEDKCDACDGKGANQVTKKLKITIPAGVDNGTRLRISSEGDAGQRGGPSGDLYVYLFVNEDEEFQRDGINILSEIKISYLQAILGCRLEVDTVDGPVELIIPAGTQPNTVMKLENRGVPRLGNPVSRGDHMLNVLIDIPNKVTPEERELLEKLAKIKGDRTGKGGLEGFLGNLFK</sequence>
<gene>
    <name evidence="1" type="primary">dnaJ</name>
    <name type="ordered locus">Npun_F0123</name>
</gene>
<organism>
    <name type="scientific">Nostoc punctiforme (strain ATCC 29133 / PCC 73102)</name>
    <dbReference type="NCBI Taxonomy" id="63737"/>
    <lineage>
        <taxon>Bacteria</taxon>
        <taxon>Bacillati</taxon>
        <taxon>Cyanobacteriota</taxon>
        <taxon>Cyanophyceae</taxon>
        <taxon>Nostocales</taxon>
        <taxon>Nostocaceae</taxon>
        <taxon>Nostoc</taxon>
    </lineage>
</organism>
<dbReference type="EMBL" id="CP001037">
    <property type="protein sequence ID" value="ACC78923.1"/>
    <property type="molecule type" value="Genomic_DNA"/>
</dbReference>
<dbReference type="RefSeq" id="WP_012406952.1">
    <property type="nucleotide sequence ID" value="NC_010628.1"/>
</dbReference>
<dbReference type="SMR" id="B2J3J3"/>
<dbReference type="STRING" id="63737.Npun_F0123"/>
<dbReference type="EnsemblBacteria" id="ACC78923">
    <property type="protein sequence ID" value="ACC78923"/>
    <property type="gene ID" value="Npun_F0123"/>
</dbReference>
<dbReference type="KEGG" id="npu:Npun_F0123"/>
<dbReference type="eggNOG" id="COG0484">
    <property type="taxonomic scope" value="Bacteria"/>
</dbReference>
<dbReference type="HOGENOM" id="CLU_017633_0_1_3"/>
<dbReference type="OrthoDB" id="9779889at2"/>
<dbReference type="PhylomeDB" id="B2J3J3"/>
<dbReference type="Proteomes" id="UP000001191">
    <property type="component" value="Chromosome"/>
</dbReference>
<dbReference type="GO" id="GO:0005737">
    <property type="term" value="C:cytoplasm"/>
    <property type="evidence" value="ECO:0007669"/>
    <property type="project" value="UniProtKB-SubCell"/>
</dbReference>
<dbReference type="GO" id="GO:0005524">
    <property type="term" value="F:ATP binding"/>
    <property type="evidence" value="ECO:0007669"/>
    <property type="project" value="InterPro"/>
</dbReference>
<dbReference type="GO" id="GO:0031072">
    <property type="term" value="F:heat shock protein binding"/>
    <property type="evidence" value="ECO:0007669"/>
    <property type="project" value="InterPro"/>
</dbReference>
<dbReference type="GO" id="GO:0051082">
    <property type="term" value="F:unfolded protein binding"/>
    <property type="evidence" value="ECO:0007669"/>
    <property type="project" value="UniProtKB-UniRule"/>
</dbReference>
<dbReference type="GO" id="GO:0008270">
    <property type="term" value="F:zinc ion binding"/>
    <property type="evidence" value="ECO:0007669"/>
    <property type="project" value="UniProtKB-UniRule"/>
</dbReference>
<dbReference type="GO" id="GO:0051085">
    <property type="term" value="P:chaperone cofactor-dependent protein refolding"/>
    <property type="evidence" value="ECO:0007669"/>
    <property type="project" value="TreeGrafter"/>
</dbReference>
<dbReference type="GO" id="GO:0006260">
    <property type="term" value="P:DNA replication"/>
    <property type="evidence" value="ECO:0007669"/>
    <property type="project" value="UniProtKB-KW"/>
</dbReference>
<dbReference type="GO" id="GO:0042026">
    <property type="term" value="P:protein refolding"/>
    <property type="evidence" value="ECO:0007669"/>
    <property type="project" value="TreeGrafter"/>
</dbReference>
<dbReference type="GO" id="GO:0009408">
    <property type="term" value="P:response to heat"/>
    <property type="evidence" value="ECO:0007669"/>
    <property type="project" value="InterPro"/>
</dbReference>
<dbReference type="CDD" id="cd06257">
    <property type="entry name" value="DnaJ"/>
    <property type="match status" value="1"/>
</dbReference>
<dbReference type="CDD" id="cd10747">
    <property type="entry name" value="DnaJ_C"/>
    <property type="match status" value="1"/>
</dbReference>
<dbReference type="CDD" id="cd10719">
    <property type="entry name" value="DnaJ_zf"/>
    <property type="match status" value="1"/>
</dbReference>
<dbReference type="FunFam" id="2.60.260.20:FF:000005">
    <property type="entry name" value="Chaperone protein dnaJ 1, mitochondrial"/>
    <property type="match status" value="1"/>
</dbReference>
<dbReference type="FunFam" id="2.10.230.10:FF:000002">
    <property type="entry name" value="Molecular chaperone DnaJ"/>
    <property type="match status" value="1"/>
</dbReference>
<dbReference type="Gene3D" id="1.10.287.110">
    <property type="entry name" value="DnaJ domain"/>
    <property type="match status" value="1"/>
</dbReference>
<dbReference type="Gene3D" id="2.10.230.10">
    <property type="entry name" value="Heat shock protein DnaJ, cysteine-rich domain"/>
    <property type="match status" value="1"/>
</dbReference>
<dbReference type="Gene3D" id="2.60.260.20">
    <property type="entry name" value="Urease metallochaperone UreE, N-terminal domain"/>
    <property type="match status" value="2"/>
</dbReference>
<dbReference type="HAMAP" id="MF_01152">
    <property type="entry name" value="DnaJ"/>
    <property type="match status" value="1"/>
</dbReference>
<dbReference type="InterPro" id="IPR012724">
    <property type="entry name" value="DnaJ"/>
</dbReference>
<dbReference type="InterPro" id="IPR002939">
    <property type="entry name" value="DnaJ_C"/>
</dbReference>
<dbReference type="InterPro" id="IPR001623">
    <property type="entry name" value="DnaJ_domain"/>
</dbReference>
<dbReference type="InterPro" id="IPR008971">
    <property type="entry name" value="HSP40/DnaJ_pept-bd"/>
</dbReference>
<dbReference type="InterPro" id="IPR001305">
    <property type="entry name" value="HSP_DnaJ_Cys-rich_dom"/>
</dbReference>
<dbReference type="InterPro" id="IPR036410">
    <property type="entry name" value="HSP_DnaJ_Cys-rich_dom_sf"/>
</dbReference>
<dbReference type="InterPro" id="IPR036869">
    <property type="entry name" value="J_dom_sf"/>
</dbReference>
<dbReference type="NCBIfam" id="TIGR02349">
    <property type="entry name" value="DnaJ_bact"/>
    <property type="match status" value="1"/>
</dbReference>
<dbReference type="NCBIfam" id="NF008035">
    <property type="entry name" value="PRK10767.1"/>
    <property type="match status" value="1"/>
</dbReference>
<dbReference type="NCBIfam" id="NF010886">
    <property type="entry name" value="PRK14293.1"/>
    <property type="match status" value="1"/>
</dbReference>
<dbReference type="PANTHER" id="PTHR43096:SF10">
    <property type="entry name" value="CHAPERONE PROTEIN DNAJ A6, CHLOROPLASTIC"/>
    <property type="match status" value="1"/>
</dbReference>
<dbReference type="PANTHER" id="PTHR43096">
    <property type="entry name" value="DNAJ HOMOLOG 1, MITOCHONDRIAL-RELATED"/>
    <property type="match status" value="1"/>
</dbReference>
<dbReference type="Pfam" id="PF00226">
    <property type="entry name" value="DnaJ"/>
    <property type="match status" value="1"/>
</dbReference>
<dbReference type="Pfam" id="PF01556">
    <property type="entry name" value="DnaJ_C"/>
    <property type="match status" value="1"/>
</dbReference>
<dbReference type="Pfam" id="PF00684">
    <property type="entry name" value="DnaJ_CXXCXGXG"/>
    <property type="match status" value="1"/>
</dbReference>
<dbReference type="PRINTS" id="PR00625">
    <property type="entry name" value="JDOMAIN"/>
</dbReference>
<dbReference type="SMART" id="SM00271">
    <property type="entry name" value="DnaJ"/>
    <property type="match status" value="1"/>
</dbReference>
<dbReference type="SUPFAM" id="SSF46565">
    <property type="entry name" value="Chaperone J-domain"/>
    <property type="match status" value="1"/>
</dbReference>
<dbReference type="SUPFAM" id="SSF57938">
    <property type="entry name" value="DnaJ/Hsp40 cysteine-rich domain"/>
    <property type="match status" value="1"/>
</dbReference>
<dbReference type="SUPFAM" id="SSF49493">
    <property type="entry name" value="HSP40/DnaJ peptide-binding domain"/>
    <property type="match status" value="2"/>
</dbReference>
<dbReference type="PROSITE" id="PS50076">
    <property type="entry name" value="DNAJ_2"/>
    <property type="match status" value="1"/>
</dbReference>
<dbReference type="PROSITE" id="PS51188">
    <property type="entry name" value="ZF_CR"/>
    <property type="match status" value="1"/>
</dbReference>
<protein>
    <recommendedName>
        <fullName evidence="1">Chaperone protein DnaJ</fullName>
    </recommendedName>
</protein>
<proteinExistence type="inferred from homology"/>
<feature type="chain" id="PRO_1000137706" description="Chaperone protein DnaJ">
    <location>
        <begin position="1"/>
        <end position="375"/>
    </location>
</feature>
<feature type="domain" description="J" evidence="1">
    <location>
        <begin position="4"/>
        <end position="68"/>
    </location>
</feature>
<feature type="repeat" description="CXXCXGXG motif">
    <location>
        <begin position="148"/>
        <end position="155"/>
    </location>
</feature>
<feature type="repeat" description="CXXCXGXG motif">
    <location>
        <begin position="165"/>
        <end position="172"/>
    </location>
</feature>
<feature type="repeat" description="CXXCXGXG motif">
    <location>
        <begin position="191"/>
        <end position="198"/>
    </location>
</feature>
<feature type="repeat" description="CXXCXGXG motif">
    <location>
        <begin position="205"/>
        <end position="212"/>
    </location>
</feature>
<feature type="zinc finger region" description="CR-type" evidence="1">
    <location>
        <begin position="135"/>
        <end position="217"/>
    </location>
</feature>
<feature type="binding site" evidence="1">
    <location>
        <position position="148"/>
    </location>
    <ligand>
        <name>Zn(2+)</name>
        <dbReference type="ChEBI" id="CHEBI:29105"/>
        <label>1</label>
    </ligand>
</feature>
<feature type="binding site" evidence="1">
    <location>
        <position position="151"/>
    </location>
    <ligand>
        <name>Zn(2+)</name>
        <dbReference type="ChEBI" id="CHEBI:29105"/>
        <label>1</label>
    </ligand>
</feature>
<feature type="binding site" evidence="1">
    <location>
        <position position="165"/>
    </location>
    <ligand>
        <name>Zn(2+)</name>
        <dbReference type="ChEBI" id="CHEBI:29105"/>
        <label>2</label>
    </ligand>
</feature>
<feature type="binding site" evidence="1">
    <location>
        <position position="168"/>
    </location>
    <ligand>
        <name>Zn(2+)</name>
        <dbReference type="ChEBI" id="CHEBI:29105"/>
        <label>2</label>
    </ligand>
</feature>
<feature type="binding site" evidence="1">
    <location>
        <position position="191"/>
    </location>
    <ligand>
        <name>Zn(2+)</name>
        <dbReference type="ChEBI" id="CHEBI:29105"/>
        <label>2</label>
    </ligand>
</feature>
<feature type="binding site" evidence="1">
    <location>
        <position position="194"/>
    </location>
    <ligand>
        <name>Zn(2+)</name>
        <dbReference type="ChEBI" id="CHEBI:29105"/>
        <label>2</label>
    </ligand>
</feature>
<feature type="binding site" evidence="1">
    <location>
        <position position="205"/>
    </location>
    <ligand>
        <name>Zn(2+)</name>
        <dbReference type="ChEBI" id="CHEBI:29105"/>
        <label>1</label>
    </ligand>
</feature>
<feature type="binding site" evidence="1">
    <location>
        <position position="208"/>
    </location>
    <ligand>
        <name>Zn(2+)</name>
        <dbReference type="ChEBI" id="CHEBI:29105"/>
        <label>1</label>
    </ligand>
</feature>
<reference key="1">
    <citation type="journal article" date="2013" name="Plant Physiol.">
        <title>A Nostoc punctiforme Sugar Transporter Necessary to Establish a Cyanobacterium-Plant Symbiosis.</title>
        <authorList>
            <person name="Ekman M."/>
            <person name="Picossi S."/>
            <person name="Campbell E.L."/>
            <person name="Meeks J.C."/>
            <person name="Flores E."/>
        </authorList>
    </citation>
    <scope>NUCLEOTIDE SEQUENCE [LARGE SCALE GENOMIC DNA]</scope>
    <source>
        <strain>ATCC 29133 / PCC 73102</strain>
    </source>
</reference>
<keyword id="KW-0143">Chaperone</keyword>
<keyword id="KW-0963">Cytoplasm</keyword>
<keyword id="KW-0235">DNA replication</keyword>
<keyword id="KW-0479">Metal-binding</keyword>
<keyword id="KW-1185">Reference proteome</keyword>
<keyword id="KW-0677">Repeat</keyword>
<keyword id="KW-0346">Stress response</keyword>
<keyword id="KW-0862">Zinc</keyword>
<keyword id="KW-0863">Zinc-finger</keyword>
<comment type="function">
    <text evidence="1">Participates actively in the response to hyperosmotic and heat shock by preventing the aggregation of stress-denatured proteins and by disaggregating proteins, also in an autonomous, DnaK-independent fashion. Unfolded proteins bind initially to DnaJ; upon interaction with the DnaJ-bound protein, DnaK hydrolyzes its bound ATP, resulting in the formation of a stable complex. GrpE releases ADP from DnaK; ATP binding to DnaK triggers the release of the substrate protein, thus completing the reaction cycle. Several rounds of ATP-dependent interactions between DnaJ, DnaK and GrpE are required for fully efficient folding. Also involved, together with DnaK and GrpE, in the DNA replication of plasmids through activation of initiation proteins.</text>
</comment>
<comment type="cofactor">
    <cofactor evidence="1">
        <name>Zn(2+)</name>
        <dbReference type="ChEBI" id="CHEBI:29105"/>
    </cofactor>
    <text evidence="1">Binds 2 Zn(2+) ions per monomer.</text>
</comment>
<comment type="subunit">
    <text evidence="1">Homodimer.</text>
</comment>
<comment type="subcellular location">
    <subcellularLocation>
        <location evidence="1">Cytoplasm</location>
    </subcellularLocation>
</comment>
<comment type="domain">
    <text evidence="1">The J domain is necessary and sufficient to stimulate DnaK ATPase activity. Zinc center 1 plays an important role in the autonomous, DnaK-independent chaperone activity of DnaJ. Zinc center 2 is essential for interaction with DnaK and for DnaJ activity.</text>
</comment>
<comment type="similarity">
    <text evidence="1">Belongs to the DnaJ family.</text>
</comment>